<protein>
    <recommendedName>
        <fullName evidence="1">ATP synthase subunit delta</fullName>
    </recommendedName>
    <alternativeName>
        <fullName evidence="1">ATP synthase F(1) sector subunit delta</fullName>
    </alternativeName>
    <alternativeName>
        <fullName evidence="1">F-type ATPase subunit delta</fullName>
        <shortName evidence="1">F-ATPase subunit delta</shortName>
    </alternativeName>
</protein>
<keyword id="KW-0066">ATP synthesis</keyword>
<keyword id="KW-0997">Cell inner membrane</keyword>
<keyword id="KW-1003">Cell membrane</keyword>
<keyword id="KW-0139">CF(1)</keyword>
<keyword id="KW-0375">Hydrogen ion transport</keyword>
<keyword id="KW-0406">Ion transport</keyword>
<keyword id="KW-0472">Membrane</keyword>
<keyword id="KW-0813">Transport</keyword>
<gene>
    <name evidence="1" type="primary">atpH</name>
    <name type="ordered locus">Pmob_0748</name>
</gene>
<name>ATPD_PETMO</name>
<sequence>MKASYFLASKYAQALLGTLEEKGEISRLDEYVEAFQRLKKALESSESLRDMVYSPLIPPKHIVSRMKDVSEFDDTIFVQFLEVLADKRRQNLIPFMSHILYQESLEREKVVEVRLVLPNEVSNTIINQVKQAIQNKTGRKIKLRTQFNEDLIGGLQLYIGDKFFDYSVKGFLQDIQSAYAPIGGGEIFES</sequence>
<evidence type="ECO:0000255" key="1">
    <source>
        <dbReference type="HAMAP-Rule" id="MF_01416"/>
    </source>
</evidence>
<reference key="1">
    <citation type="submission" date="2007-11" db="EMBL/GenBank/DDBJ databases">
        <title>Complete sequence of Petroga mobilis SJ95.</title>
        <authorList>
            <consortium name="US DOE Joint Genome Institute"/>
            <person name="Copeland A."/>
            <person name="Lucas S."/>
            <person name="Lapidus A."/>
            <person name="Barry K."/>
            <person name="Glavina del Rio T."/>
            <person name="Dalin E."/>
            <person name="Tice H."/>
            <person name="Pitluck S."/>
            <person name="Meincke L."/>
            <person name="Brettin T."/>
            <person name="Bruce D."/>
            <person name="Detter J.C."/>
            <person name="Han C."/>
            <person name="Kuske C.R."/>
            <person name="Schmutz J."/>
            <person name="Larimer F."/>
            <person name="Land M."/>
            <person name="Hauser L."/>
            <person name="Kyrpides N."/>
            <person name="Mikhailova N."/>
            <person name="Noll K."/>
            <person name="Richardson P."/>
        </authorList>
    </citation>
    <scope>NUCLEOTIDE SEQUENCE [LARGE SCALE GENOMIC DNA]</scope>
    <source>
        <strain>DSM 10674 / SJ95</strain>
    </source>
</reference>
<dbReference type="EMBL" id="CP000879">
    <property type="protein sequence ID" value="ABX31472.1"/>
    <property type="molecule type" value="Genomic_DNA"/>
</dbReference>
<dbReference type="RefSeq" id="WP_012208575.1">
    <property type="nucleotide sequence ID" value="NC_010003.1"/>
</dbReference>
<dbReference type="SMR" id="A9BFX6"/>
<dbReference type="STRING" id="403833.Pmob_0748"/>
<dbReference type="KEGG" id="pmo:Pmob_0748"/>
<dbReference type="eggNOG" id="COG0712">
    <property type="taxonomic scope" value="Bacteria"/>
</dbReference>
<dbReference type="HOGENOM" id="CLU_085114_1_1_0"/>
<dbReference type="OrthoDB" id="49080at2"/>
<dbReference type="Proteomes" id="UP000000789">
    <property type="component" value="Chromosome"/>
</dbReference>
<dbReference type="GO" id="GO:0005886">
    <property type="term" value="C:plasma membrane"/>
    <property type="evidence" value="ECO:0007669"/>
    <property type="project" value="UniProtKB-SubCell"/>
</dbReference>
<dbReference type="GO" id="GO:0045259">
    <property type="term" value="C:proton-transporting ATP synthase complex"/>
    <property type="evidence" value="ECO:0007669"/>
    <property type="project" value="UniProtKB-KW"/>
</dbReference>
<dbReference type="GO" id="GO:0046933">
    <property type="term" value="F:proton-transporting ATP synthase activity, rotational mechanism"/>
    <property type="evidence" value="ECO:0007669"/>
    <property type="project" value="UniProtKB-UniRule"/>
</dbReference>
<dbReference type="Gene3D" id="1.10.520.20">
    <property type="entry name" value="N-terminal domain of the delta subunit of the F1F0-ATP synthase"/>
    <property type="match status" value="1"/>
</dbReference>
<dbReference type="HAMAP" id="MF_01416">
    <property type="entry name" value="ATP_synth_delta_bact"/>
    <property type="match status" value="1"/>
</dbReference>
<dbReference type="InterPro" id="IPR026015">
    <property type="entry name" value="ATP_synth_OSCP/delta_N_sf"/>
</dbReference>
<dbReference type="InterPro" id="IPR000711">
    <property type="entry name" value="ATPase_OSCP/dsu"/>
</dbReference>
<dbReference type="NCBIfam" id="TIGR01145">
    <property type="entry name" value="ATP_synt_delta"/>
    <property type="match status" value="1"/>
</dbReference>
<dbReference type="PANTHER" id="PTHR11910">
    <property type="entry name" value="ATP SYNTHASE DELTA CHAIN"/>
    <property type="match status" value="1"/>
</dbReference>
<dbReference type="Pfam" id="PF00213">
    <property type="entry name" value="OSCP"/>
    <property type="match status" value="1"/>
</dbReference>
<dbReference type="PRINTS" id="PR00125">
    <property type="entry name" value="ATPASEDELTA"/>
</dbReference>
<dbReference type="SUPFAM" id="SSF47928">
    <property type="entry name" value="N-terminal domain of the delta subunit of the F1F0-ATP synthase"/>
    <property type="match status" value="1"/>
</dbReference>
<comment type="function">
    <text evidence="1">F(1)F(0) ATP synthase produces ATP from ADP in the presence of a proton or sodium gradient. F-type ATPases consist of two structural domains, F(1) containing the extramembraneous catalytic core and F(0) containing the membrane proton channel, linked together by a central stalk and a peripheral stalk. During catalysis, ATP synthesis in the catalytic domain of F(1) is coupled via a rotary mechanism of the central stalk subunits to proton translocation.</text>
</comment>
<comment type="function">
    <text evidence="1">This protein is part of the stalk that links CF(0) to CF(1). It either transmits conformational changes from CF(0) to CF(1) or is implicated in proton conduction.</text>
</comment>
<comment type="subunit">
    <text evidence="1">F-type ATPases have 2 components, F(1) - the catalytic core - and F(0) - the membrane proton channel. F(1) has five subunits: alpha(3), beta(3), gamma(1), delta(1), epsilon(1). F(0) has three main subunits: a(1), b(2) and c(10-14). The alpha and beta chains form an alternating ring which encloses part of the gamma chain. F(1) is attached to F(0) by a central stalk formed by the gamma and epsilon chains, while a peripheral stalk is formed by the delta and b chains.</text>
</comment>
<comment type="subcellular location">
    <subcellularLocation>
        <location evidence="1">Cell inner membrane</location>
        <topology evidence="1">Peripheral membrane protein</topology>
    </subcellularLocation>
</comment>
<comment type="similarity">
    <text evidence="1">Belongs to the ATPase delta chain family.</text>
</comment>
<feature type="chain" id="PRO_0000382140" description="ATP synthase subunit delta">
    <location>
        <begin position="1"/>
        <end position="190"/>
    </location>
</feature>
<accession>A9BFX6</accession>
<organism>
    <name type="scientific">Petrotoga mobilis (strain DSM 10674 / SJ95)</name>
    <dbReference type="NCBI Taxonomy" id="403833"/>
    <lineage>
        <taxon>Bacteria</taxon>
        <taxon>Thermotogati</taxon>
        <taxon>Thermotogota</taxon>
        <taxon>Thermotogae</taxon>
        <taxon>Petrotogales</taxon>
        <taxon>Petrotogaceae</taxon>
        <taxon>Petrotoga</taxon>
    </lineage>
</organism>
<proteinExistence type="inferred from homology"/>